<protein>
    <recommendedName>
        <fullName evidence="1">Histidinol-phosphate aminotransferase</fullName>
        <ecNumber evidence="1 2">2.6.1.9</ecNumber>
    </recommendedName>
    <alternativeName>
        <fullName evidence="3">Imidazole acetol phosphate aminotransferase</fullName>
        <shortName evidence="3">IAP aminotransferase</shortName>
    </alternativeName>
    <alternativeName>
        <fullName evidence="1">Imidazole acetol-phosphate transaminase</fullName>
    </alternativeName>
</protein>
<sequence length="369" mass="40342">MTAAPELRPKSWIDSIAPYIPGSSKTLDGRPAVKLSSNENPLGTSLKAKEAYREAIDSLSLYPDSGATALREAIGACYNLDPARIIHGTGSDEILHLAAGAYAGQDDEVLYPRYSFSVYPLAARRVGATPVEAPDDDYRCSVDALLKAVTPRTRVVFIANPNNPTGTWITRAEVEKLHNGLPRNCLLVIDQAYAEYLDPECDDGALALAKNTKNVLVTRTFSKIYGLAAERIGWAYACPEIIDALNRIRAPFNVTIAGQKAAVAALEDQAFIQNSFKHNKKWRGWFENQMALLSNAGIRVIPSSANFTLLLFEGSLTAETAYKALMDHGYTTRWLPGQRLPHALRITIGSEKHMQDVAGILTSLVRQAL</sequence>
<gene>
    <name evidence="1" type="primary">hisC</name>
    <name evidence="3" type="synonym">hisH</name>
    <name type="ordered locus">ZMO0421</name>
</gene>
<comment type="function">
    <text evidence="2">Catalyzes the conversion of imidazole acetol phosphate to histidinol phosphate. Can also transaminate aromatic amino acids and histidine in addition to histidinol phosphate.</text>
</comment>
<comment type="catalytic activity">
    <reaction evidence="1 2">
        <text>L-histidinol phosphate + 2-oxoglutarate = 3-(imidazol-4-yl)-2-oxopropyl phosphate + L-glutamate</text>
        <dbReference type="Rhea" id="RHEA:23744"/>
        <dbReference type="ChEBI" id="CHEBI:16810"/>
        <dbReference type="ChEBI" id="CHEBI:29985"/>
        <dbReference type="ChEBI" id="CHEBI:57766"/>
        <dbReference type="ChEBI" id="CHEBI:57980"/>
        <dbReference type="EC" id="2.6.1.9"/>
    </reaction>
</comment>
<comment type="cofactor">
    <cofactor evidence="1 2">
        <name>pyridoxal 5'-phosphate</name>
        <dbReference type="ChEBI" id="CHEBI:597326"/>
    </cofactor>
</comment>
<comment type="biophysicochemical properties">
    <kinetics>
        <KM evidence="2">0.17 mM for histidinol phosphate</KM>
        <KM evidence="2">3.39 mM for tyrosine</KM>
        <KM evidence="2">43.48 mM for phenylalanine</KM>
    </kinetics>
    <phDependence>
        <text evidence="2">Optimum pH is 8.0.</text>
    </phDependence>
</comment>
<comment type="pathway">
    <text evidence="1">Amino-acid biosynthesis; L-histidine biosynthesis; L-histidine from 5-phospho-alpha-D-ribose 1-diphosphate: step 7/9.</text>
</comment>
<comment type="subunit">
    <text evidence="1 2">Homodimer.</text>
</comment>
<comment type="similarity">
    <text evidence="1">Belongs to the class-II pyridoxal-phosphate-dependent aminotransferase family. Histidinol-phosphate aminotransferase subfamily.</text>
</comment>
<name>HIS8_ZYMMO</name>
<organism>
    <name type="scientific">Zymomonas mobilis subsp. mobilis (strain ATCC 31821 / ZM4 / CP4)</name>
    <dbReference type="NCBI Taxonomy" id="264203"/>
    <lineage>
        <taxon>Bacteria</taxon>
        <taxon>Pseudomonadati</taxon>
        <taxon>Pseudomonadota</taxon>
        <taxon>Alphaproteobacteria</taxon>
        <taxon>Sphingomonadales</taxon>
        <taxon>Zymomonadaceae</taxon>
        <taxon>Zymomonas</taxon>
    </lineage>
</organism>
<proteinExistence type="evidence at protein level"/>
<reference key="1">
    <citation type="journal article" date="1995" name="J. Bacteriol.">
        <title>Imidazole acetol phosphate aminotransferase in Zymomonas mobilis: molecular genetic, biochemical, and evolutionary analyses.</title>
        <authorList>
            <person name="Gu W."/>
            <person name="Zhao G.S."/>
            <person name="Eddy C."/>
            <person name="Jensen R.A."/>
        </authorList>
    </citation>
    <scope>NUCLEOTIDE SEQUENCE [GENOMIC DNA]</scope>
    <scope>FUNCTION</scope>
    <scope>CATALYTIC ACTIVITY</scope>
    <scope>COFACTOR</scope>
    <scope>BIOPHYSICOCHEMICAL PROPERTIES</scope>
    <scope>SUBUNIT</scope>
    <source>
        <strain>ATCC 31821 / ZM4 / CP4</strain>
    </source>
</reference>
<reference key="2">
    <citation type="journal article" date="2005" name="Nat. Biotechnol.">
        <title>The genome sequence of the ethanologenic bacterium Zymomonas mobilis ZM4.</title>
        <authorList>
            <person name="Seo J.-S."/>
            <person name="Chong H."/>
            <person name="Park H.S."/>
            <person name="Yoon K.-O."/>
            <person name="Jung C."/>
            <person name="Kim J.J."/>
            <person name="Hong J.H."/>
            <person name="Kim H."/>
            <person name="Kim J.-H."/>
            <person name="Kil J.-I."/>
            <person name="Park C.J."/>
            <person name="Oh H.-M."/>
            <person name="Lee J.-S."/>
            <person name="Jin S.-J."/>
            <person name="Um H.-W."/>
            <person name="Lee H.-J."/>
            <person name="Oh S.-J."/>
            <person name="Kim J.Y."/>
            <person name="Kang H.L."/>
            <person name="Lee S.Y."/>
            <person name="Lee K.J."/>
            <person name="Kang H.S."/>
        </authorList>
    </citation>
    <scope>NUCLEOTIDE SEQUENCE [LARGE SCALE GENOMIC DNA]</scope>
    <source>
        <strain>ATCC 31821 / ZM4 / CP4</strain>
    </source>
</reference>
<reference key="3">
    <citation type="journal article" date="1993" name="Eur. J. Biochem.">
        <title>An allosterically insensitive class of cyclohexadienyl dehydrogenase from Zymomonas mobilis.</title>
        <authorList>
            <person name="Zhao G."/>
            <person name="Xia T."/>
            <person name="Ingram L.O."/>
            <person name="Jensen R.A."/>
        </authorList>
    </citation>
    <scope>NUCLEOTIDE SEQUENCE [GENOMIC DNA] OF 192-369</scope>
    <source>
        <strain>ATCC 31821 / ZM4 / CP4</strain>
    </source>
</reference>
<feature type="chain" id="PRO_0000153489" description="Histidinol-phosphate aminotransferase">
    <location>
        <begin position="1"/>
        <end position="369"/>
    </location>
</feature>
<feature type="modified residue" description="N6-(pyridoxal phosphate)lysine" evidence="1">
    <location>
        <position position="223"/>
    </location>
</feature>
<feature type="sequence conflict" description="In Ref. 1 and 3." evidence="4" ref="1 3">
    <original>NKKWRGWF</original>
    <variation>SKKVAWLV</variation>
    <location>
        <begin position="279"/>
        <end position="286"/>
    </location>
</feature>
<feature type="sequence conflict" description="In Ref. 1 and 3." evidence="4" ref="1 3">
    <original>A</original>
    <variation>V</variation>
    <location>
        <position position="296"/>
    </location>
</feature>
<feature type="sequence conflict" description="In Ref. 1 and 3." evidence="4" ref="1 3">
    <original>E</original>
    <variation>K</variation>
    <location>
        <position position="319"/>
    </location>
</feature>
<accession>P34037</accession>
<accession>Q5NQF9</accession>
<keyword id="KW-0028">Amino-acid biosynthesis</keyword>
<keyword id="KW-0032">Aminotransferase</keyword>
<keyword id="KW-0368">Histidine biosynthesis</keyword>
<keyword id="KW-0663">Pyridoxal phosphate</keyword>
<keyword id="KW-1185">Reference proteome</keyword>
<keyword id="KW-0808">Transferase</keyword>
<dbReference type="EC" id="2.6.1.9" evidence="1 2"/>
<dbReference type="EMBL" id="L36343">
    <property type="protein sequence ID" value="AAC41445.1"/>
    <property type="molecule type" value="Genomic_DNA"/>
</dbReference>
<dbReference type="EMBL" id="AE008692">
    <property type="protein sequence ID" value="AAV89045.1"/>
    <property type="molecule type" value="Genomic_DNA"/>
</dbReference>
<dbReference type="EMBL" id="X67208">
    <property type="status" value="NOT_ANNOTATED_CDS"/>
    <property type="molecule type" value="Genomic_DNA"/>
</dbReference>
<dbReference type="PIR" id="S29383">
    <property type="entry name" value="S29383"/>
</dbReference>
<dbReference type="RefSeq" id="WP_011240336.1">
    <property type="nucleotide sequence ID" value="NZ_CP035711.1"/>
</dbReference>
<dbReference type="SMR" id="P34037"/>
<dbReference type="STRING" id="264203.ZMO0421"/>
<dbReference type="GeneID" id="79904380"/>
<dbReference type="KEGG" id="zmo:ZMO0421"/>
<dbReference type="eggNOG" id="COG0079">
    <property type="taxonomic scope" value="Bacteria"/>
</dbReference>
<dbReference type="HOGENOM" id="CLU_017584_3_3_5"/>
<dbReference type="SABIO-RK" id="P34037"/>
<dbReference type="UniPathway" id="UPA00031">
    <property type="reaction ID" value="UER00012"/>
</dbReference>
<dbReference type="Proteomes" id="UP000001173">
    <property type="component" value="Chromosome"/>
</dbReference>
<dbReference type="GO" id="GO:0004400">
    <property type="term" value="F:histidinol-phosphate transaminase activity"/>
    <property type="evidence" value="ECO:0007669"/>
    <property type="project" value="UniProtKB-UniRule"/>
</dbReference>
<dbReference type="GO" id="GO:0030170">
    <property type="term" value="F:pyridoxal phosphate binding"/>
    <property type="evidence" value="ECO:0007669"/>
    <property type="project" value="InterPro"/>
</dbReference>
<dbReference type="GO" id="GO:0000105">
    <property type="term" value="P:L-histidine biosynthetic process"/>
    <property type="evidence" value="ECO:0007669"/>
    <property type="project" value="UniProtKB-UniRule"/>
</dbReference>
<dbReference type="CDD" id="cd00609">
    <property type="entry name" value="AAT_like"/>
    <property type="match status" value="1"/>
</dbReference>
<dbReference type="Gene3D" id="3.90.1150.10">
    <property type="entry name" value="Aspartate Aminotransferase, domain 1"/>
    <property type="match status" value="1"/>
</dbReference>
<dbReference type="Gene3D" id="3.40.640.10">
    <property type="entry name" value="Type I PLP-dependent aspartate aminotransferase-like (Major domain)"/>
    <property type="match status" value="1"/>
</dbReference>
<dbReference type="HAMAP" id="MF_01023">
    <property type="entry name" value="HisC_aminotrans_2"/>
    <property type="match status" value="1"/>
</dbReference>
<dbReference type="InterPro" id="IPR004839">
    <property type="entry name" value="Aminotransferase_I/II_large"/>
</dbReference>
<dbReference type="InterPro" id="IPR005861">
    <property type="entry name" value="HisP_aminotrans"/>
</dbReference>
<dbReference type="InterPro" id="IPR050106">
    <property type="entry name" value="HistidinolP_aminotransfase"/>
</dbReference>
<dbReference type="InterPro" id="IPR015424">
    <property type="entry name" value="PyrdxlP-dep_Trfase"/>
</dbReference>
<dbReference type="InterPro" id="IPR015421">
    <property type="entry name" value="PyrdxlP-dep_Trfase_major"/>
</dbReference>
<dbReference type="InterPro" id="IPR015422">
    <property type="entry name" value="PyrdxlP-dep_Trfase_small"/>
</dbReference>
<dbReference type="NCBIfam" id="TIGR01141">
    <property type="entry name" value="hisC"/>
    <property type="match status" value="1"/>
</dbReference>
<dbReference type="PANTHER" id="PTHR43643:SF3">
    <property type="entry name" value="HISTIDINOL-PHOSPHATE AMINOTRANSFERASE"/>
    <property type="match status" value="1"/>
</dbReference>
<dbReference type="PANTHER" id="PTHR43643">
    <property type="entry name" value="HISTIDINOL-PHOSPHATE AMINOTRANSFERASE 2"/>
    <property type="match status" value="1"/>
</dbReference>
<dbReference type="Pfam" id="PF00155">
    <property type="entry name" value="Aminotran_1_2"/>
    <property type="match status" value="1"/>
</dbReference>
<dbReference type="SUPFAM" id="SSF53383">
    <property type="entry name" value="PLP-dependent transferases"/>
    <property type="match status" value="1"/>
</dbReference>
<evidence type="ECO:0000255" key="1">
    <source>
        <dbReference type="HAMAP-Rule" id="MF_01023"/>
    </source>
</evidence>
<evidence type="ECO:0000269" key="2">
    <source>
    </source>
</evidence>
<evidence type="ECO:0000303" key="3">
    <source>
    </source>
</evidence>
<evidence type="ECO:0000305" key="4"/>